<keyword id="KW-0067">ATP-binding</keyword>
<keyword id="KW-0145">Chemotaxis</keyword>
<keyword id="KW-0963">Cytoplasm</keyword>
<keyword id="KW-0418">Kinase</keyword>
<keyword id="KW-0547">Nucleotide-binding</keyword>
<keyword id="KW-0597">Phosphoprotein</keyword>
<keyword id="KW-0808">Transferase</keyword>
<keyword id="KW-0902">Two-component regulatory system</keyword>
<dbReference type="EC" id="2.7.13.3"/>
<dbReference type="EMBL" id="X80027">
    <property type="protein sequence ID" value="CAA56330.1"/>
    <property type="molecule type" value="Genomic_DNA"/>
</dbReference>
<dbReference type="PIR" id="S70180">
    <property type="entry name" value="S70180"/>
</dbReference>
<dbReference type="RefSeq" id="WP_002719591.1">
    <property type="nucleotide sequence ID" value="NZ_CP033450.1"/>
</dbReference>
<dbReference type="SMR" id="Q53135"/>
<dbReference type="BRENDA" id="2.7.13.3">
    <property type="organism ID" value="5383"/>
</dbReference>
<dbReference type="GO" id="GO:0005737">
    <property type="term" value="C:cytoplasm"/>
    <property type="evidence" value="ECO:0007669"/>
    <property type="project" value="UniProtKB-SubCell"/>
</dbReference>
<dbReference type="GO" id="GO:0005524">
    <property type="term" value="F:ATP binding"/>
    <property type="evidence" value="ECO:0007669"/>
    <property type="project" value="UniProtKB-KW"/>
</dbReference>
<dbReference type="GO" id="GO:0000155">
    <property type="term" value="F:phosphorelay sensor kinase activity"/>
    <property type="evidence" value="ECO:0007669"/>
    <property type="project" value="InterPro"/>
</dbReference>
<dbReference type="GO" id="GO:0006935">
    <property type="term" value="P:chemotaxis"/>
    <property type="evidence" value="ECO:0007669"/>
    <property type="project" value="UniProtKB-KW"/>
</dbReference>
<dbReference type="CDD" id="cd00731">
    <property type="entry name" value="CheA_reg"/>
    <property type="match status" value="1"/>
</dbReference>
<dbReference type="CDD" id="cd16916">
    <property type="entry name" value="HATPase_CheA-like"/>
    <property type="match status" value="1"/>
</dbReference>
<dbReference type="CDD" id="cd00088">
    <property type="entry name" value="HPT"/>
    <property type="match status" value="1"/>
</dbReference>
<dbReference type="FunFam" id="3.30.565.10:FF:000016">
    <property type="entry name" value="Chemotaxis protein CheA, putative"/>
    <property type="match status" value="1"/>
</dbReference>
<dbReference type="Gene3D" id="1.10.287.560">
    <property type="entry name" value="Histidine kinase CheA-like, homodimeric domain"/>
    <property type="match status" value="1"/>
</dbReference>
<dbReference type="Gene3D" id="3.30.565.10">
    <property type="entry name" value="Histidine kinase-like ATPase, C-terminal domain"/>
    <property type="match status" value="1"/>
</dbReference>
<dbReference type="Gene3D" id="1.20.120.160">
    <property type="entry name" value="HPT domain"/>
    <property type="match status" value="1"/>
</dbReference>
<dbReference type="Gene3D" id="2.30.30.40">
    <property type="entry name" value="SH3 Domains"/>
    <property type="match status" value="1"/>
</dbReference>
<dbReference type="InterPro" id="IPR051315">
    <property type="entry name" value="Bact_Chemotaxis_CheA"/>
</dbReference>
<dbReference type="InterPro" id="IPR004105">
    <property type="entry name" value="CheA-like_dim"/>
</dbReference>
<dbReference type="InterPro" id="IPR037006">
    <property type="entry name" value="CheA-like_homodim_sf"/>
</dbReference>
<dbReference type="InterPro" id="IPR036061">
    <property type="entry name" value="CheW-like_dom_sf"/>
</dbReference>
<dbReference type="InterPro" id="IPR002545">
    <property type="entry name" value="CheW-lke_dom"/>
</dbReference>
<dbReference type="InterPro" id="IPR036890">
    <property type="entry name" value="HATPase_C_sf"/>
</dbReference>
<dbReference type="InterPro" id="IPR005467">
    <property type="entry name" value="His_kinase_dom"/>
</dbReference>
<dbReference type="InterPro" id="IPR036097">
    <property type="entry name" value="HisK_dim/P_sf"/>
</dbReference>
<dbReference type="InterPro" id="IPR036641">
    <property type="entry name" value="HPT_dom_sf"/>
</dbReference>
<dbReference type="InterPro" id="IPR004358">
    <property type="entry name" value="Sig_transdc_His_kin-like_C"/>
</dbReference>
<dbReference type="InterPro" id="IPR008207">
    <property type="entry name" value="Sig_transdc_His_kin_Hpt_dom"/>
</dbReference>
<dbReference type="PANTHER" id="PTHR43395:SF10">
    <property type="entry name" value="CHEMOTAXIS PROTEIN CHEA"/>
    <property type="match status" value="1"/>
</dbReference>
<dbReference type="PANTHER" id="PTHR43395">
    <property type="entry name" value="SENSOR HISTIDINE KINASE CHEA"/>
    <property type="match status" value="1"/>
</dbReference>
<dbReference type="Pfam" id="PF01584">
    <property type="entry name" value="CheW"/>
    <property type="match status" value="1"/>
</dbReference>
<dbReference type="Pfam" id="PF02895">
    <property type="entry name" value="H-kinase_dim"/>
    <property type="match status" value="1"/>
</dbReference>
<dbReference type="Pfam" id="PF02518">
    <property type="entry name" value="HATPase_c"/>
    <property type="match status" value="1"/>
</dbReference>
<dbReference type="Pfam" id="PF01627">
    <property type="entry name" value="Hpt"/>
    <property type="match status" value="1"/>
</dbReference>
<dbReference type="PRINTS" id="PR00344">
    <property type="entry name" value="BCTRLSENSOR"/>
</dbReference>
<dbReference type="SMART" id="SM00260">
    <property type="entry name" value="CheW"/>
    <property type="match status" value="1"/>
</dbReference>
<dbReference type="SMART" id="SM01231">
    <property type="entry name" value="H-kinase_dim"/>
    <property type="match status" value="1"/>
</dbReference>
<dbReference type="SMART" id="SM00387">
    <property type="entry name" value="HATPase_c"/>
    <property type="match status" value="1"/>
</dbReference>
<dbReference type="SMART" id="SM00073">
    <property type="entry name" value="HPT"/>
    <property type="match status" value="1"/>
</dbReference>
<dbReference type="SUPFAM" id="SSF55874">
    <property type="entry name" value="ATPase domain of HSP90 chaperone/DNA topoisomerase II/histidine kinase"/>
    <property type="match status" value="1"/>
</dbReference>
<dbReference type="SUPFAM" id="SSF50341">
    <property type="entry name" value="CheW-like"/>
    <property type="match status" value="1"/>
</dbReference>
<dbReference type="SUPFAM" id="SSF47226">
    <property type="entry name" value="Histidine-containing phosphotransfer domain, HPT domain"/>
    <property type="match status" value="1"/>
</dbReference>
<dbReference type="SUPFAM" id="SSF47384">
    <property type="entry name" value="Homodimeric domain of signal transducing histidine kinase"/>
    <property type="match status" value="1"/>
</dbReference>
<dbReference type="PROSITE" id="PS50851">
    <property type="entry name" value="CHEW"/>
    <property type="match status" value="1"/>
</dbReference>
<dbReference type="PROSITE" id="PS50109">
    <property type="entry name" value="HIS_KIN"/>
    <property type="match status" value="1"/>
</dbReference>
<dbReference type="PROSITE" id="PS50894">
    <property type="entry name" value="HPT"/>
    <property type="match status" value="1"/>
</dbReference>
<feature type="chain" id="PRO_0000074717" description="Chemotaxis protein CheA">
    <location>
        <begin position="1"/>
        <end position="686"/>
    </location>
</feature>
<feature type="domain" description="HPt" evidence="4">
    <location>
        <begin position="1"/>
        <end position="106"/>
    </location>
</feature>
<feature type="domain" description="Histidine kinase" evidence="3">
    <location>
        <begin position="290"/>
        <end position="540"/>
    </location>
</feature>
<feature type="domain" description="CheW-like" evidence="2">
    <location>
        <begin position="542"/>
        <end position="678"/>
    </location>
</feature>
<feature type="region of interest" description="Disordered" evidence="5">
    <location>
        <begin position="253"/>
        <end position="293"/>
    </location>
</feature>
<feature type="modified residue" description="Phosphohistidine; by autocatalysis" evidence="3">
    <location>
        <position position="49"/>
    </location>
</feature>
<gene>
    <name type="primary">cheA</name>
</gene>
<name>CHEA_CERSP</name>
<sequence length="686" mass="74291">MDQSDIRSAFFVECEDLMEALNEGLDRIEDTLDDGHDDETVNAVFRAVHSIKGGAGAFKLDALVRFAHQFETTLDALRAGRVSADPPLLALLHKAADRLSDLLQAARTGSETATIDPDDLVAQLAQAAGEEEAGEADAEDLGFVPMRLDLDLPAAAPDEGQSGCYSIDFSPTRALYACGNDTSILFRVLSDLGRMEVRLDRSRLPDFDALDWQESWLDWHLTLETDEPEHQIDEVFEFVEDLCRLEIRPMAMEAPRTDPDPEPDPEPDPPASGPAAAKKSPAEDHRTSSPRATVRVELDRVDRLINIVGELVINQAMLSQCVQDEGVPPRSPVRNRLDDFRNLAREIQESVMAIRAQAIKPLFQRMSRIAREASEISQKQIRLVTEGESTEVDKTVIERLADPLTHMIRNAVDHGIEPADRRLHLGKPPVGLITLTAAHRSGRVLIEIKDDGAGINRPRVLEIAQGKGLVAQDAQLTEEEIDGLLFMPGFSTASVVSDLSGRGVGMDVVKSAIESLGGRITIASDPGVGTTFTISLPLTLAVLDGMVVDVGGQTMVVPVSAIVETLRPRPADIHVLGSGDQVVAIRGSLVPIVDCGSIFGFRAPVRSYEESVLLLVETARQKLCALVVDTIHDQRQVVIKGLENGYGRIPGVAAATILGDGRIALIIAPEEAVDIGTSGGTFSMEF</sequence>
<protein>
    <recommendedName>
        <fullName>Chemotaxis protein CheA</fullName>
        <ecNumber>2.7.13.3</ecNumber>
    </recommendedName>
</protein>
<accession>Q53135</accession>
<reference key="1">
    <citation type="journal article" date="1995" name="Mol. Microbiol.">
        <title>Identification of a chemotaxis operon with two cheY genes in Rhodobacter sphaeroides.</title>
        <authorList>
            <person name="Ward M.J."/>
            <person name="Bell A.W."/>
            <person name="Hamblin P.A."/>
            <person name="Packer H.L."/>
            <person name="Armitage J.P."/>
        </authorList>
    </citation>
    <scope>NUCLEOTIDE SEQUENCE [GENOMIC DNA]</scope>
    <source>
        <strain>WS8N</strain>
    </source>
</reference>
<evidence type="ECO:0000250" key="1"/>
<evidence type="ECO:0000255" key="2">
    <source>
        <dbReference type="PROSITE-ProRule" id="PRU00052"/>
    </source>
</evidence>
<evidence type="ECO:0000255" key="3">
    <source>
        <dbReference type="PROSITE-ProRule" id="PRU00107"/>
    </source>
</evidence>
<evidence type="ECO:0000255" key="4">
    <source>
        <dbReference type="PROSITE-ProRule" id="PRU00110"/>
    </source>
</evidence>
<evidence type="ECO:0000256" key="5">
    <source>
        <dbReference type="SAM" id="MobiDB-lite"/>
    </source>
</evidence>
<evidence type="ECO:0000305" key="6"/>
<proteinExistence type="inferred from homology"/>
<organism>
    <name type="scientific">Cereibacter sphaeroides</name>
    <name type="common">Rhodobacter sphaeroides</name>
    <dbReference type="NCBI Taxonomy" id="1063"/>
    <lineage>
        <taxon>Bacteria</taxon>
        <taxon>Pseudomonadati</taxon>
        <taxon>Pseudomonadota</taxon>
        <taxon>Alphaproteobacteria</taxon>
        <taxon>Rhodobacterales</taxon>
        <taxon>Paracoccaceae</taxon>
        <taxon>Cereibacter</taxon>
    </lineage>
</organism>
<comment type="function">
    <text evidence="1">Involved in the transmission of sensory signals from the chemoreceptors to the flagellar motors. CheA is autophosphorylated; it can transfer its phosphate group to either CheB or CheY (By similarity).</text>
</comment>
<comment type="catalytic activity">
    <reaction>
        <text>ATP + protein L-histidine = ADP + protein N-phospho-L-histidine.</text>
        <dbReference type="EC" id="2.7.13.3"/>
    </reaction>
</comment>
<comment type="subcellular location">
    <subcellularLocation>
        <location evidence="6">Cytoplasm</location>
    </subcellularLocation>
</comment>